<feature type="chain" id="PRO_0000107451" description="TnpB-like protein MJ1635">
    <location>
        <begin position="1"/>
        <end position="414"/>
    </location>
</feature>
<feature type="binding site" evidence="1">
    <location>
        <position position="329"/>
    </location>
    <ligand>
        <name>Zn(2+)</name>
        <dbReference type="ChEBI" id="CHEBI:29105"/>
    </ligand>
</feature>
<feature type="binding site" evidence="1">
    <location>
        <position position="332"/>
    </location>
    <ligand>
        <name>Zn(2+)</name>
        <dbReference type="ChEBI" id="CHEBI:29105"/>
    </ligand>
</feature>
<feature type="binding site" evidence="1">
    <location>
        <position position="346"/>
    </location>
    <ligand>
        <name>Zn(2+)</name>
        <dbReference type="ChEBI" id="CHEBI:29105"/>
    </ligand>
</feature>
<feature type="binding site" evidence="1">
    <location>
        <position position="349"/>
    </location>
    <ligand>
        <name>Zn(2+)</name>
        <dbReference type="ChEBI" id="CHEBI:29105"/>
    </ligand>
</feature>
<reference key="1">
    <citation type="journal article" date="1996" name="Science">
        <title>Complete genome sequence of the methanogenic archaeon, Methanococcus jannaschii.</title>
        <authorList>
            <person name="Bult C.J."/>
            <person name="White O."/>
            <person name="Olsen G.J."/>
            <person name="Zhou L."/>
            <person name="Fleischmann R.D."/>
            <person name="Sutton G.G."/>
            <person name="Blake J.A."/>
            <person name="FitzGerald L.M."/>
            <person name="Clayton R.A."/>
            <person name="Gocayne J.D."/>
            <person name="Kerlavage A.R."/>
            <person name="Dougherty B.A."/>
            <person name="Tomb J.-F."/>
            <person name="Adams M.D."/>
            <person name="Reich C.I."/>
            <person name="Overbeek R."/>
            <person name="Kirkness E.F."/>
            <person name="Weinstock K.G."/>
            <person name="Merrick J.M."/>
            <person name="Glodek A."/>
            <person name="Scott J.L."/>
            <person name="Geoghagen N.S.M."/>
            <person name="Weidman J.F."/>
            <person name="Fuhrmann J.L."/>
            <person name="Nguyen D."/>
            <person name="Utterback T.R."/>
            <person name="Kelley J.M."/>
            <person name="Peterson J.D."/>
            <person name="Sadow P.W."/>
            <person name="Hanna M.C."/>
            <person name="Cotton M.D."/>
            <person name="Roberts K.M."/>
            <person name="Hurst M.A."/>
            <person name="Kaine B.P."/>
            <person name="Borodovsky M."/>
            <person name="Klenk H.-P."/>
            <person name="Fraser C.M."/>
            <person name="Smith H.O."/>
            <person name="Woese C.R."/>
            <person name="Venter J.C."/>
        </authorList>
    </citation>
    <scope>NUCLEOTIDE SEQUENCE [LARGE SCALE GENOMIC DNA]</scope>
    <source>
        <strain>ATCC 43067 / DSM 2661 / JAL-1 / JCM 10045 / NBRC 100440</strain>
    </source>
</reference>
<accession>Q59029</accession>
<organism>
    <name type="scientific">Methanocaldococcus jannaschii (strain ATCC 43067 / DSM 2661 / JAL-1 / JCM 10045 / NBRC 100440)</name>
    <name type="common">Methanococcus jannaschii</name>
    <dbReference type="NCBI Taxonomy" id="243232"/>
    <lineage>
        <taxon>Archaea</taxon>
        <taxon>Methanobacteriati</taxon>
        <taxon>Methanobacteriota</taxon>
        <taxon>Methanomada group</taxon>
        <taxon>Methanococci</taxon>
        <taxon>Methanococcales</taxon>
        <taxon>Methanocaldococcaceae</taxon>
        <taxon>Methanocaldococcus</taxon>
    </lineage>
</organism>
<dbReference type="EMBL" id="L77117">
    <property type="protein sequence ID" value="AAB99664.1"/>
    <property type="molecule type" value="Genomic_DNA"/>
</dbReference>
<dbReference type="PIR" id="A64504">
    <property type="entry name" value="A64504"/>
</dbReference>
<dbReference type="RefSeq" id="WP_010871159.1">
    <property type="nucleotide sequence ID" value="NC_000909.1"/>
</dbReference>
<dbReference type="SMR" id="Q59029"/>
<dbReference type="FunCoup" id="Q59029">
    <property type="interactions" value="1"/>
</dbReference>
<dbReference type="STRING" id="243232.MJ_1635"/>
<dbReference type="PaxDb" id="243232-MJ_1635"/>
<dbReference type="EnsemblBacteria" id="AAB99664">
    <property type="protein sequence ID" value="AAB99664"/>
    <property type="gene ID" value="MJ_1635"/>
</dbReference>
<dbReference type="GeneID" id="1452544"/>
<dbReference type="KEGG" id="mja:MJ_1635"/>
<dbReference type="eggNOG" id="arCOG00679">
    <property type="taxonomic scope" value="Archaea"/>
</dbReference>
<dbReference type="HOGENOM" id="CLU_032903_3_4_2"/>
<dbReference type="InParanoid" id="Q59029"/>
<dbReference type="OrthoDB" id="33505at2157"/>
<dbReference type="PhylomeDB" id="Q59029"/>
<dbReference type="Proteomes" id="UP000000805">
    <property type="component" value="Chromosome"/>
</dbReference>
<dbReference type="GO" id="GO:0003677">
    <property type="term" value="F:DNA binding"/>
    <property type="evidence" value="ECO:0007669"/>
    <property type="project" value="UniProtKB-KW"/>
</dbReference>
<dbReference type="GO" id="GO:0046872">
    <property type="term" value="F:metal ion binding"/>
    <property type="evidence" value="ECO:0007669"/>
    <property type="project" value="UniProtKB-KW"/>
</dbReference>
<dbReference type="GO" id="GO:0006310">
    <property type="term" value="P:DNA recombination"/>
    <property type="evidence" value="ECO:0007669"/>
    <property type="project" value="UniProtKB-KW"/>
</dbReference>
<dbReference type="GO" id="GO:0032196">
    <property type="term" value="P:transposition"/>
    <property type="evidence" value="ECO:0007669"/>
    <property type="project" value="UniProtKB-KW"/>
</dbReference>
<dbReference type="InterPro" id="IPR010095">
    <property type="entry name" value="Cas12f1-like_TNB"/>
</dbReference>
<dbReference type="InterPro" id="IPR001959">
    <property type="entry name" value="Transposase"/>
</dbReference>
<dbReference type="NCBIfam" id="NF040570">
    <property type="entry name" value="guided_TnpB"/>
    <property type="match status" value="1"/>
</dbReference>
<dbReference type="NCBIfam" id="TIGR01766">
    <property type="entry name" value="IS200/IS605 family accessory protein TnpB-like domain"/>
    <property type="match status" value="1"/>
</dbReference>
<dbReference type="Pfam" id="PF07282">
    <property type="entry name" value="Cas12f1-like_TNB"/>
    <property type="match status" value="1"/>
</dbReference>
<dbReference type="Pfam" id="PF01385">
    <property type="entry name" value="OrfB_IS605"/>
    <property type="match status" value="1"/>
</dbReference>
<protein>
    <recommendedName>
        <fullName>TnpB-like protein MJ1635</fullName>
    </recommendedName>
</protein>
<proteinExistence type="inferred from homology"/>
<keyword id="KW-0233">DNA recombination</keyword>
<keyword id="KW-0238">DNA-binding</keyword>
<keyword id="KW-0479">Metal-binding</keyword>
<keyword id="KW-1185">Reference proteome</keyword>
<keyword id="KW-0814">Transposable element</keyword>
<keyword id="KW-0815">Transposition</keyword>
<keyword id="KW-0862">Zinc</keyword>
<name>Y1635_METJA</name>
<sequence length="414" mass="49003">MSNKTKLKDNKELLYQVVLSYKVSHNYPLKAFLIECKNKLNECIDMIWNNIKYTKKDNPKLPKSNEFKRELRNKLLENWNYASHYIDGIIKTSYSILQSWASNYKRGYRTKTKPIAKRLFVRVKTTLIKYDKEKGEIRITIKPRKDYLILNIKNEWFFDKVKNLTIGEIILKEKETFLTFKDNLNYSDKGMIVGVDSNLRSLDLFHPIEGWTRVDLTELHRIKEVYDRKIDFLKKLLKKFPLRAMRKINRLFERRRNRVKDFLHKLTIQLSRLFPDAIFVFEDLNKRRMYKSKYFNRKIDRVNWNGLIEKISYKTIVILVNPAYTSTICPICGSRMESQEGQVVYCSNCLNSFNRQLVGCYNIFKRGLGNIKEIMGGSGVTTTGVEVSFGKLMTPNPNVIYIVDYNGKYFNEIA</sequence>
<gene>
    <name type="ordered locus">MJ1635</name>
</gene>
<evidence type="ECO:0000250" key="1">
    <source>
        <dbReference type="UniProtKB" id="Q7DF80"/>
    </source>
</evidence>
<evidence type="ECO:0000305" key="2"/>
<comment type="similarity">
    <text evidence="2">In the N-terminal section; belongs to the transposase 2 family.</text>
</comment>
<comment type="similarity">
    <text evidence="2">In the C-terminal section; belongs to the transposase 35 family.</text>
</comment>